<evidence type="ECO:0000255" key="1">
    <source>
        <dbReference type="HAMAP-Rule" id="MF_00553"/>
    </source>
</evidence>
<evidence type="ECO:0000256" key="2">
    <source>
        <dbReference type="SAM" id="MobiDB-lite"/>
    </source>
</evidence>
<accession>Q9YAC7</accession>
<organism>
    <name type="scientific">Aeropyrum pernix (strain ATCC 700893 / DSM 11879 / JCM 9820 / NBRC 100138 / K1)</name>
    <dbReference type="NCBI Taxonomy" id="272557"/>
    <lineage>
        <taxon>Archaea</taxon>
        <taxon>Thermoproteota</taxon>
        <taxon>Thermoprotei</taxon>
        <taxon>Desulfurococcales</taxon>
        <taxon>Desulfurococcaceae</taxon>
        <taxon>Aeropyrum</taxon>
    </lineage>
</organism>
<dbReference type="EMBL" id="BA000002">
    <property type="protein sequence ID" value="BAA81022.1"/>
    <property type="molecule type" value="Genomic_DNA"/>
</dbReference>
<dbReference type="PIR" id="F72504">
    <property type="entry name" value="F72504"/>
</dbReference>
<dbReference type="RefSeq" id="WP_010866737.1">
    <property type="nucleotide sequence ID" value="NC_000854.2"/>
</dbReference>
<dbReference type="SMR" id="Q9YAC7"/>
<dbReference type="STRING" id="272557.APE_2012"/>
<dbReference type="EnsemblBacteria" id="BAA81022">
    <property type="protein sequence ID" value="BAA81022"/>
    <property type="gene ID" value="APE_2012"/>
</dbReference>
<dbReference type="GeneID" id="1445128"/>
<dbReference type="KEGG" id="ape:APE_2012"/>
<dbReference type="PATRIC" id="fig|272557.25.peg.1341"/>
<dbReference type="eggNOG" id="arCOG01306">
    <property type="taxonomic scope" value="Archaea"/>
</dbReference>
<dbReference type="Proteomes" id="UP000002518">
    <property type="component" value="Chromosome"/>
</dbReference>
<dbReference type="GO" id="GO:0005737">
    <property type="term" value="C:cytoplasm"/>
    <property type="evidence" value="ECO:0007669"/>
    <property type="project" value="UniProtKB-SubCell"/>
</dbReference>
<dbReference type="GO" id="GO:0022623">
    <property type="term" value="C:proteasome-activating nucleotidase complex"/>
    <property type="evidence" value="ECO:0007669"/>
    <property type="project" value="UniProtKB-UniRule"/>
</dbReference>
<dbReference type="GO" id="GO:0005524">
    <property type="term" value="F:ATP binding"/>
    <property type="evidence" value="ECO:0007669"/>
    <property type="project" value="UniProtKB-UniRule"/>
</dbReference>
<dbReference type="GO" id="GO:0016887">
    <property type="term" value="F:ATP hydrolysis activity"/>
    <property type="evidence" value="ECO:0007669"/>
    <property type="project" value="UniProtKB-UniRule"/>
</dbReference>
<dbReference type="GO" id="GO:0010498">
    <property type="term" value="P:proteasomal protein catabolic process"/>
    <property type="evidence" value="ECO:0007669"/>
    <property type="project" value="UniProtKB-UniRule"/>
</dbReference>
<dbReference type="GO" id="GO:0043335">
    <property type="term" value="P:protein unfolding"/>
    <property type="evidence" value="ECO:0007669"/>
    <property type="project" value="UniProtKB-UniRule"/>
</dbReference>
<dbReference type="CDD" id="cd19502">
    <property type="entry name" value="RecA-like_PAN_like"/>
    <property type="match status" value="1"/>
</dbReference>
<dbReference type="FunFam" id="3.40.50.300:FF:000033">
    <property type="entry name" value="26S protease regulatory subunit 6B"/>
    <property type="match status" value="1"/>
</dbReference>
<dbReference type="FunFam" id="1.10.8.60:FF:000001">
    <property type="entry name" value="ATP-dependent zinc metalloprotease FtsH"/>
    <property type="match status" value="1"/>
</dbReference>
<dbReference type="Gene3D" id="1.10.8.60">
    <property type="match status" value="1"/>
</dbReference>
<dbReference type="Gene3D" id="2.40.50.140">
    <property type="entry name" value="Nucleic acid-binding proteins"/>
    <property type="match status" value="1"/>
</dbReference>
<dbReference type="Gene3D" id="3.40.50.300">
    <property type="entry name" value="P-loop containing nucleotide triphosphate hydrolases"/>
    <property type="match status" value="1"/>
</dbReference>
<dbReference type="HAMAP" id="MF_00553">
    <property type="entry name" value="PAN"/>
    <property type="match status" value="1"/>
</dbReference>
<dbReference type="InterPro" id="IPR050221">
    <property type="entry name" value="26S_Proteasome_ATPase"/>
</dbReference>
<dbReference type="InterPro" id="IPR003593">
    <property type="entry name" value="AAA+_ATPase"/>
</dbReference>
<dbReference type="InterPro" id="IPR041569">
    <property type="entry name" value="AAA_lid_3"/>
</dbReference>
<dbReference type="InterPro" id="IPR003959">
    <property type="entry name" value="ATPase_AAA_core"/>
</dbReference>
<dbReference type="InterPro" id="IPR003960">
    <property type="entry name" value="ATPase_AAA_CS"/>
</dbReference>
<dbReference type="InterPro" id="IPR012340">
    <property type="entry name" value="NA-bd_OB-fold"/>
</dbReference>
<dbReference type="InterPro" id="IPR023501">
    <property type="entry name" value="Nucleotidase_PAN"/>
</dbReference>
<dbReference type="InterPro" id="IPR027417">
    <property type="entry name" value="P-loop_NTPase"/>
</dbReference>
<dbReference type="InterPro" id="IPR032501">
    <property type="entry name" value="Prot_ATP_ID_OB_2nd"/>
</dbReference>
<dbReference type="NCBIfam" id="NF003069">
    <property type="entry name" value="PRK03992.1"/>
    <property type="match status" value="1"/>
</dbReference>
<dbReference type="NCBIfam" id="TIGR01242">
    <property type="entry name" value="proteasome-activating nucleotidase"/>
    <property type="match status" value="1"/>
</dbReference>
<dbReference type="PANTHER" id="PTHR23073">
    <property type="entry name" value="26S PROTEASOME REGULATORY SUBUNIT"/>
    <property type="match status" value="1"/>
</dbReference>
<dbReference type="Pfam" id="PF00004">
    <property type="entry name" value="AAA"/>
    <property type="match status" value="1"/>
</dbReference>
<dbReference type="Pfam" id="PF17862">
    <property type="entry name" value="AAA_lid_3"/>
    <property type="match status" value="1"/>
</dbReference>
<dbReference type="Pfam" id="PF16450">
    <property type="entry name" value="Prot_ATP_ID_OB_C"/>
    <property type="match status" value="1"/>
</dbReference>
<dbReference type="SMART" id="SM00382">
    <property type="entry name" value="AAA"/>
    <property type="match status" value="1"/>
</dbReference>
<dbReference type="SUPFAM" id="SSF52540">
    <property type="entry name" value="P-loop containing nucleoside triphosphate hydrolases"/>
    <property type="match status" value="1"/>
</dbReference>
<dbReference type="PROSITE" id="PS00674">
    <property type="entry name" value="AAA"/>
    <property type="match status" value="1"/>
</dbReference>
<protein>
    <recommendedName>
        <fullName evidence="1">Proteasome-activating nucleotidase</fullName>
        <shortName evidence="1">PAN</shortName>
    </recommendedName>
    <alternativeName>
        <fullName evidence="1">Proteasomal ATPase</fullName>
    </alternativeName>
    <alternativeName>
        <fullName evidence="1">Proteasome regulatory ATPase</fullName>
    </alternativeName>
    <alternativeName>
        <fullName evidence="1">Proteasome regulatory particle</fullName>
    </alternativeName>
</protein>
<name>PAN_AERPE</name>
<reference key="1">
    <citation type="journal article" date="1999" name="DNA Res.">
        <title>Complete genome sequence of an aerobic hyper-thermophilic crenarchaeon, Aeropyrum pernix K1.</title>
        <authorList>
            <person name="Kawarabayasi Y."/>
            <person name="Hino Y."/>
            <person name="Horikawa H."/>
            <person name="Yamazaki S."/>
            <person name="Haikawa Y."/>
            <person name="Jin-no K."/>
            <person name="Takahashi M."/>
            <person name="Sekine M."/>
            <person name="Baba S."/>
            <person name="Ankai A."/>
            <person name="Kosugi H."/>
            <person name="Hosoyama A."/>
            <person name="Fukui S."/>
            <person name="Nagai Y."/>
            <person name="Nishijima K."/>
            <person name="Nakazawa H."/>
            <person name="Takamiya M."/>
            <person name="Masuda S."/>
            <person name="Funahashi T."/>
            <person name="Tanaka T."/>
            <person name="Kudoh Y."/>
            <person name="Yamazaki J."/>
            <person name="Kushida N."/>
            <person name="Oguchi A."/>
            <person name="Aoki K."/>
            <person name="Kubota K."/>
            <person name="Nakamura Y."/>
            <person name="Nomura N."/>
            <person name="Sako Y."/>
            <person name="Kikuchi H."/>
        </authorList>
    </citation>
    <scope>NUCLEOTIDE SEQUENCE [LARGE SCALE GENOMIC DNA]</scope>
    <source>
        <strain>ATCC 700893 / DSM 11879 / JCM 9820 / NBRC 100138 / K1</strain>
    </source>
</reference>
<feature type="chain" id="PRO_0000084738" description="Proteasome-activating nucleotidase">
    <location>
        <begin position="1"/>
        <end position="409"/>
    </location>
</feature>
<feature type="region of interest" description="Disordered" evidence="2">
    <location>
        <begin position="1"/>
        <end position="22"/>
    </location>
</feature>
<feature type="coiled-coil region" evidence="1">
    <location>
        <begin position="23"/>
        <end position="58"/>
    </location>
</feature>
<feature type="binding site" evidence="1">
    <location>
        <begin position="183"/>
        <end position="188"/>
    </location>
    <ligand>
        <name>ATP</name>
        <dbReference type="ChEBI" id="CHEBI:30616"/>
    </ligand>
</feature>
<feature type="binding site" evidence="1">
    <location>
        <position position="322"/>
    </location>
    <ligand>
        <name>ATP</name>
        <dbReference type="ChEBI" id="CHEBI:30616"/>
    </ligand>
</feature>
<comment type="function">
    <text evidence="1">ATPase which is responsible for recognizing, binding, unfolding and translocation of substrate proteins into the archaeal 20S proteasome core particle. Is essential for opening the gate of the 20S proteasome via an interaction with its C-terminus, thereby allowing substrate entry and access to the site of proteolysis. Thus, the C-termini of the proteasomal ATPase function like a 'key in a lock' to induce gate opening and therefore regulate proteolysis. Unfolding activity requires energy from ATP hydrolysis, whereas ATP binding alone promotes ATPase-20S proteasome association which triggers gate opening, and supports translocation of unfolded substrates.</text>
</comment>
<comment type="subunit">
    <text evidence="1">Homohexamer. The hexameric complex has a two-ring architecture resembling a top hat that caps the 20S proteasome core at one or both ends. Upon ATP-binding, the C-terminus of PAN interacts with the alpha-rings of the proteasome core by binding to the intersubunit pockets.</text>
</comment>
<comment type="subcellular location">
    <subcellularLocation>
        <location evidence="1">Cytoplasm</location>
    </subcellularLocation>
</comment>
<comment type="domain">
    <text evidence="1">Consists of three main regions, an N-terminal coiled-coil domain that may assist in substrate recognition, an interdomain involved in PAN hexamerization, and a C-terminal ATPase domain of the AAA type.</text>
</comment>
<comment type="similarity">
    <text evidence="1">Belongs to the AAA ATPase family.</text>
</comment>
<sequence>MTLSSAGGSRSHRHNGGHSERDVEIRILKDKVRSLTKEKISLQKELEYYKNEITKLLSPPYIEAVVLEVIDDNRVVVKSSTGPNLIVNVAAGVDARSLKPGAIVALNNRGSTIVDVLPGRYDPLVKAMEVEERPKVFFKDVGGLEEQIREIYEAVVLPIKNPHLFRELGIDPPKGVLLHGPPGTGKTLLAKAVAGETEATFIRVVGSELVNKFIGEGARLVREIFRLAREKAPSILFIDEIDAIASKRVDIGTSGDREVQRTMLQLLAELDGFDPLDNVKVIAATNRLDLIDPAVLRPGRFDRIIEVPLPSLRGRLEILGIHTRKAKMAPDVDLEAIAKLTEGFSGADLKAVVVEAGYNAIRRGSRVITMDDMIKAVEKVKAALDKRGGGDPFIRAQQKSGDDTIATVI</sequence>
<gene>
    <name evidence="1" type="primary">pan</name>
    <name type="ordered locus">APE_2012</name>
</gene>
<keyword id="KW-0067">ATP-binding</keyword>
<keyword id="KW-0143">Chaperone</keyword>
<keyword id="KW-0175">Coiled coil</keyword>
<keyword id="KW-0963">Cytoplasm</keyword>
<keyword id="KW-0547">Nucleotide-binding</keyword>
<keyword id="KW-0647">Proteasome</keyword>
<keyword id="KW-1185">Reference proteome</keyword>
<proteinExistence type="inferred from homology"/>